<gene>
    <name evidence="1" type="primary">prfB</name>
    <name type="ordered locus">RC0368</name>
</gene>
<feature type="chain" id="PRO_0000166838" description="Peptide chain release factor 2">
    <location>
        <begin position="1"/>
        <end position="368"/>
    </location>
</feature>
<feature type="modified residue" description="N5-methylglutamine" evidence="1">
    <location>
        <position position="250"/>
    </location>
</feature>
<comment type="function">
    <text evidence="1">Peptide chain release factor 2 directs the termination of translation in response to the peptide chain termination codons UGA and UAA.</text>
</comment>
<comment type="subcellular location">
    <subcellularLocation>
        <location evidence="1">Cytoplasm</location>
    </subcellularLocation>
</comment>
<comment type="PTM">
    <text evidence="1">Methylated by PrmC. Methylation increases the termination efficiency of RF2.</text>
</comment>
<comment type="similarity">
    <text evidence="1">Belongs to the prokaryotic/mitochondrial release factor family.</text>
</comment>
<name>RF2_RICCN</name>
<protein>
    <recommendedName>
        <fullName evidence="1">Peptide chain release factor 2</fullName>
        <shortName evidence="1">RF-2</shortName>
    </recommendedName>
</protein>
<proteinExistence type="inferred from homology"/>
<organism>
    <name type="scientific">Rickettsia conorii (strain ATCC VR-613 / Malish 7)</name>
    <dbReference type="NCBI Taxonomy" id="272944"/>
    <lineage>
        <taxon>Bacteria</taxon>
        <taxon>Pseudomonadati</taxon>
        <taxon>Pseudomonadota</taxon>
        <taxon>Alphaproteobacteria</taxon>
        <taxon>Rickettsiales</taxon>
        <taxon>Rickettsiaceae</taxon>
        <taxon>Rickettsieae</taxon>
        <taxon>Rickettsia</taxon>
        <taxon>spotted fever group</taxon>
    </lineage>
</organism>
<evidence type="ECO:0000255" key="1">
    <source>
        <dbReference type="HAMAP-Rule" id="MF_00094"/>
    </source>
</evidence>
<keyword id="KW-0963">Cytoplasm</keyword>
<keyword id="KW-0488">Methylation</keyword>
<keyword id="KW-0648">Protein biosynthesis</keyword>
<accession>Q92IQ2</accession>
<reference key="1">
    <citation type="journal article" date="2001" name="Science">
        <title>Mechanisms of evolution in Rickettsia conorii and R. prowazekii.</title>
        <authorList>
            <person name="Ogata H."/>
            <person name="Audic S."/>
            <person name="Renesto-Audiffren P."/>
            <person name="Fournier P.-E."/>
            <person name="Barbe V."/>
            <person name="Samson D."/>
            <person name="Roux V."/>
            <person name="Cossart P."/>
            <person name="Weissenbach J."/>
            <person name="Claverie J.-M."/>
            <person name="Raoult D."/>
        </authorList>
    </citation>
    <scope>NUCLEOTIDE SEQUENCE [LARGE SCALE GENOMIC DNA]</scope>
    <source>
        <strain>ATCC VR-613 / Malish 7</strain>
    </source>
</reference>
<sequence>MRAEIENYVKKIEQSLELLWRSLDVEASTERLNALEELTADPSLWNDQANAQKLLREKSNLEEKLNAFNKLKSNLKDALELEEMAEAENDLETLSQIEQDLKNLSIIAAKFETECLFSGEADGNNCFLEINAGAGGTESHDWASIMMRMYLRFAERLGFKTEIINMINGEEAGIKSCTIRIIGKRAYGWFKTETGVHRLVRISPFNAAGKRMTSFASSWVYPEIDDNIAITIEDKDLRIDTFRASGAGGQHVNTTDSAVRITHIPTGTVTQCQSDRSQHKNKAQAMKMLQAKLYELEMQKRTDSVNEQNAAKTDNSWGHQIRSYVLQPYHMVKDLRTDYETSDTKGVLDGDLEEFVSAHLAMNVGGKK</sequence>
<dbReference type="EMBL" id="AE006914">
    <property type="protein sequence ID" value="AAL02906.1"/>
    <property type="molecule type" value="Genomic_DNA"/>
</dbReference>
<dbReference type="PIR" id="H97745">
    <property type="entry name" value="H97745"/>
</dbReference>
<dbReference type="RefSeq" id="WP_010977023.1">
    <property type="nucleotide sequence ID" value="NC_003103.1"/>
</dbReference>
<dbReference type="SMR" id="Q92IQ2"/>
<dbReference type="GeneID" id="23331430"/>
<dbReference type="KEGG" id="rco:RC0368"/>
<dbReference type="HOGENOM" id="CLU_221951_1_0_5"/>
<dbReference type="Proteomes" id="UP000000816">
    <property type="component" value="Chromosome"/>
</dbReference>
<dbReference type="GO" id="GO:0005737">
    <property type="term" value="C:cytoplasm"/>
    <property type="evidence" value="ECO:0007669"/>
    <property type="project" value="UniProtKB-SubCell"/>
</dbReference>
<dbReference type="GO" id="GO:0016149">
    <property type="term" value="F:translation release factor activity, codon specific"/>
    <property type="evidence" value="ECO:0007669"/>
    <property type="project" value="UniProtKB-UniRule"/>
</dbReference>
<dbReference type="FunFam" id="3.30.160.20:FF:000010">
    <property type="entry name" value="Peptide chain release factor 2"/>
    <property type="match status" value="1"/>
</dbReference>
<dbReference type="Gene3D" id="3.30.160.20">
    <property type="match status" value="1"/>
</dbReference>
<dbReference type="Gene3D" id="3.30.70.1660">
    <property type="match status" value="1"/>
</dbReference>
<dbReference type="Gene3D" id="1.20.58.410">
    <property type="entry name" value="Release factor"/>
    <property type="match status" value="1"/>
</dbReference>
<dbReference type="HAMAP" id="MF_00094">
    <property type="entry name" value="Rel_fac_2"/>
    <property type="match status" value="1"/>
</dbReference>
<dbReference type="InterPro" id="IPR005139">
    <property type="entry name" value="PCRF"/>
</dbReference>
<dbReference type="InterPro" id="IPR000352">
    <property type="entry name" value="Pep_chain_release_fac_I"/>
</dbReference>
<dbReference type="InterPro" id="IPR045853">
    <property type="entry name" value="Pep_chain_release_fac_I_sf"/>
</dbReference>
<dbReference type="InterPro" id="IPR004374">
    <property type="entry name" value="PrfB"/>
</dbReference>
<dbReference type="NCBIfam" id="TIGR00020">
    <property type="entry name" value="prfB"/>
    <property type="match status" value="1"/>
</dbReference>
<dbReference type="PANTHER" id="PTHR43116:SF3">
    <property type="entry name" value="CLASS I PEPTIDE CHAIN RELEASE FACTOR"/>
    <property type="match status" value="1"/>
</dbReference>
<dbReference type="PANTHER" id="PTHR43116">
    <property type="entry name" value="PEPTIDE CHAIN RELEASE FACTOR 2"/>
    <property type="match status" value="1"/>
</dbReference>
<dbReference type="Pfam" id="PF03462">
    <property type="entry name" value="PCRF"/>
    <property type="match status" value="1"/>
</dbReference>
<dbReference type="Pfam" id="PF00472">
    <property type="entry name" value="RF-1"/>
    <property type="match status" value="1"/>
</dbReference>
<dbReference type="SMART" id="SM00937">
    <property type="entry name" value="PCRF"/>
    <property type="match status" value="1"/>
</dbReference>
<dbReference type="SUPFAM" id="SSF75620">
    <property type="entry name" value="Release factor"/>
    <property type="match status" value="1"/>
</dbReference>
<dbReference type="PROSITE" id="PS00745">
    <property type="entry name" value="RF_PROK_I"/>
    <property type="match status" value="1"/>
</dbReference>